<feature type="chain" id="PRO_0000377194" description="tRNA dimethylallyltransferase">
    <location>
        <begin position="1"/>
        <end position="317"/>
    </location>
</feature>
<feature type="binding site" evidence="1">
    <location>
        <begin position="13"/>
        <end position="20"/>
    </location>
    <ligand>
        <name>ATP</name>
        <dbReference type="ChEBI" id="CHEBI:30616"/>
    </ligand>
</feature>
<feature type="binding site" evidence="1">
    <location>
        <begin position="15"/>
        <end position="20"/>
    </location>
    <ligand>
        <name>substrate</name>
    </ligand>
</feature>
<feature type="site" description="Interaction with substrate tRNA" evidence="1">
    <location>
        <position position="110"/>
    </location>
</feature>
<feature type="site" description="Interaction with substrate tRNA" evidence="1">
    <location>
        <position position="131"/>
    </location>
</feature>
<organism>
    <name type="scientific">Kineococcus radiotolerans (strain ATCC BAA-149 / DSM 14245 / SRS30216)</name>
    <dbReference type="NCBI Taxonomy" id="266940"/>
    <lineage>
        <taxon>Bacteria</taxon>
        <taxon>Bacillati</taxon>
        <taxon>Actinomycetota</taxon>
        <taxon>Actinomycetes</taxon>
        <taxon>Kineosporiales</taxon>
        <taxon>Kineosporiaceae</taxon>
        <taxon>Kineococcus</taxon>
    </lineage>
</organism>
<evidence type="ECO:0000255" key="1">
    <source>
        <dbReference type="HAMAP-Rule" id="MF_00185"/>
    </source>
</evidence>
<name>MIAA_KINRD</name>
<gene>
    <name evidence="1" type="primary">miaA</name>
    <name type="ordered locus">Krad_1500</name>
</gene>
<proteinExistence type="inferred from homology"/>
<protein>
    <recommendedName>
        <fullName evidence="1">tRNA dimethylallyltransferase</fullName>
        <ecNumber evidence="1">2.5.1.75</ecNumber>
    </recommendedName>
    <alternativeName>
        <fullName evidence="1">Dimethylallyl diphosphate:tRNA dimethylallyltransferase</fullName>
        <shortName evidence="1">DMAPP:tRNA dimethylallyltransferase</shortName>
        <shortName evidence="1">DMATase</shortName>
    </alternativeName>
    <alternativeName>
        <fullName evidence="1">Isopentenyl-diphosphate:tRNA isopentenyltransferase</fullName>
        <shortName evidence="1">IPP transferase</shortName>
        <shortName evidence="1">IPPT</shortName>
        <shortName evidence="1">IPTase</shortName>
    </alternativeName>
</protein>
<reference key="1">
    <citation type="journal article" date="2008" name="PLoS ONE">
        <title>Survival in nuclear waste, extreme resistance, and potential applications gleaned from the genome sequence of Kineococcus radiotolerans SRS30216.</title>
        <authorList>
            <person name="Bagwell C.E."/>
            <person name="Bhat S."/>
            <person name="Hawkins G.M."/>
            <person name="Smith B.W."/>
            <person name="Biswas T."/>
            <person name="Hoover T.R."/>
            <person name="Saunders E."/>
            <person name="Han C.S."/>
            <person name="Tsodikov O.V."/>
            <person name="Shimkets L.J."/>
        </authorList>
    </citation>
    <scope>NUCLEOTIDE SEQUENCE [LARGE SCALE GENOMIC DNA]</scope>
    <source>
        <strain>ATCC BAA-149 / DSM 14245 / SRS30216</strain>
    </source>
</reference>
<dbReference type="EC" id="2.5.1.75" evidence="1"/>
<dbReference type="EMBL" id="CP000750">
    <property type="protein sequence ID" value="ABS02988.1"/>
    <property type="molecule type" value="Genomic_DNA"/>
</dbReference>
<dbReference type="RefSeq" id="WP_011981873.1">
    <property type="nucleotide sequence ID" value="NC_009664.2"/>
</dbReference>
<dbReference type="SMR" id="A6W849"/>
<dbReference type="STRING" id="266940.Krad_1500"/>
<dbReference type="KEGG" id="kra:Krad_1500"/>
<dbReference type="eggNOG" id="COG0324">
    <property type="taxonomic scope" value="Bacteria"/>
</dbReference>
<dbReference type="HOGENOM" id="CLU_032616_0_1_11"/>
<dbReference type="OrthoDB" id="9776390at2"/>
<dbReference type="Proteomes" id="UP000001116">
    <property type="component" value="Chromosome"/>
</dbReference>
<dbReference type="GO" id="GO:0005524">
    <property type="term" value="F:ATP binding"/>
    <property type="evidence" value="ECO:0007669"/>
    <property type="project" value="UniProtKB-UniRule"/>
</dbReference>
<dbReference type="GO" id="GO:0052381">
    <property type="term" value="F:tRNA dimethylallyltransferase activity"/>
    <property type="evidence" value="ECO:0007669"/>
    <property type="project" value="UniProtKB-UniRule"/>
</dbReference>
<dbReference type="GO" id="GO:0006400">
    <property type="term" value="P:tRNA modification"/>
    <property type="evidence" value="ECO:0007669"/>
    <property type="project" value="TreeGrafter"/>
</dbReference>
<dbReference type="FunFam" id="1.10.20.140:FF:000001">
    <property type="entry name" value="tRNA dimethylallyltransferase"/>
    <property type="match status" value="1"/>
</dbReference>
<dbReference type="Gene3D" id="1.10.20.140">
    <property type="match status" value="1"/>
</dbReference>
<dbReference type="Gene3D" id="3.40.50.300">
    <property type="entry name" value="P-loop containing nucleotide triphosphate hydrolases"/>
    <property type="match status" value="1"/>
</dbReference>
<dbReference type="HAMAP" id="MF_00185">
    <property type="entry name" value="IPP_trans"/>
    <property type="match status" value="1"/>
</dbReference>
<dbReference type="InterPro" id="IPR039657">
    <property type="entry name" value="Dimethylallyltransferase"/>
</dbReference>
<dbReference type="InterPro" id="IPR018022">
    <property type="entry name" value="IPT"/>
</dbReference>
<dbReference type="InterPro" id="IPR027417">
    <property type="entry name" value="P-loop_NTPase"/>
</dbReference>
<dbReference type="NCBIfam" id="TIGR00174">
    <property type="entry name" value="miaA"/>
    <property type="match status" value="1"/>
</dbReference>
<dbReference type="PANTHER" id="PTHR11088">
    <property type="entry name" value="TRNA DIMETHYLALLYLTRANSFERASE"/>
    <property type="match status" value="1"/>
</dbReference>
<dbReference type="PANTHER" id="PTHR11088:SF60">
    <property type="entry name" value="TRNA DIMETHYLALLYLTRANSFERASE"/>
    <property type="match status" value="1"/>
</dbReference>
<dbReference type="Pfam" id="PF01715">
    <property type="entry name" value="IPPT"/>
    <property type="match status" value="1"/>
</dbReference>
<dbReference type="SUPFAM" id="SSF52540">
    <property type="entry name" value="P-loop containing nucleoside triphosphate hydrolases"/>
    <property type="match status" value="1"/>
</dbReference>
<comment type="function">
    <text evidence="1">Catalyzes the transfer of a dimethylallyl group onto the adenine at position 37 in tRNAs that read codons beginning with uridine, leading to the formation of N6-(dimethylallyl)adenosine (i(6)A).</text>
</comment>
<comment type="catalytic activity">
    <reaction evidence="1">
        <text>adenosine(37) in tRNA + dimethylallyl diphosphate = N(6)-dimethylallyladenosine(37) in tRNA + diphosphate</text>
        <dbReference type="Rhea" id="RHEA:26482"/>
        <dbReference type="Rhea" id="RHEA-COMP:10162"/>
        <dbReference type="Rhea" id="RHEA-COMP:10375"/>
        <dbReference type="ChEBI" id="CHEBI:33019"/>
        <dbReference type="ChEBI" id="CHEBI:57623"/>
        <dbReference type="ChEBI" id="CHEBI:74411"/>
        <dbReference type="ChEBI" id="CHEBI:74415"/>
        <dbReference type="EC" id="2.5.1.75"/>
    </reaction>
</comment>
<comment type="cofactor">
    <cofactor evidence="1">
        <name>Mg(2+)</name>
        <dbReference type="ChEBI" id="CHEBI:18420"/>
    </cofactor>
</comment>
<comment type="subunit">
    <text evidence="1">Monomer.</text>
</comment>
<comment type="similarity">
    <text evidence="1">Belongs to the IPP transferase family.</text>
</comment>
<accession>A6W849</accession>
<keyword id="KW-0067">ATP-binding</keyword>
<keyword id="KW-0460">Magnesium</keyword>
<keyword id="KW-0547">Nucleotide-binding</keyword>
<keyword id="KW-1185">Reference proteome</keyword>
<keyword id="KW-0808">Transferase</keyword>
<keyword id="KW-0819">tRNA processing</keyword>
<sequence length="317" mass="34276">MGQPNVPLVAVVGPTASGKSDVGVALAHLLEREHGRPGEVVNADAMQLYRGMDVGTAKLTPAEREGVPHHLLDVLDVTETAEVARFQADARAAVEDVTARGGLPLLVGGSGLYVRAAVDDLRFPGTDPEVRARWEAELAVLGPHALHARLAERDPAAAAKILPGNGRRIVRALEVGELTGRPFAASLPEQTYLRPTVQVGLAVPREQLDARIDARVERMWAAGLVAEVRDLEARGLREGRTASRALGYAQVLDAFDGTTTEDEARELTARLTRRFARKQESWFRRDPRVHWLPAPDGSDPLDLARRVLELLPVASAA</sequence>